<evidence type="ECO:0000255" key="1">
    <source>
        <dbReference type="HAMAP-Rule" id="MF_00672"/>
    </source>
</evidence>
<evidence type="ECO:0000256" key="2">
    <source>
        <dbReference type="SAM" id="MobiDB-lite"/>
    </source>
</evidence>
<dbReference type="EMBL" id="CP000613">
    <property type="protein sequence ID" value="ACI98014.1"/>
    <property type="molecule type" value="Genomic_DNA"/>
</dbReference>
<dbReference type="RefSeq" id="WP_012565806.1">
    <property type="nucleotide sequence ID" value="NC_011420.2"/>
</dbReference>
<dbReference type="SMR" id="B6IRC8"/>
<dbReference type="STRING" id="414684.RC1_0578"/>
<dbReference type="KEGG" id="rce:RC1_0578"/>
<dbReference type="eggNOG" id="COG1295">
    <property type="taxonomic scope" value="Bacteria"/>
</dbReference>
<dbReference type="HOGENOM" id="CLU_032288_1_2_5"/>
<dbReference type="OrthoDB" id="8477159at2"/>
<dbReference type="Proteomes" id="UP000001591">
    <property type="component" value="Chromosome"/>
</dbReference>
<dbReference type="GO" id="GO:0005886">
    <property type="term" value="C:plasma membrane"/>
    <property type="evidence" value="ECO:0007669"/>
    <property type="project" value="UniProtKB-SubCell"/>
</dbReference>
<dbReference type="HAMAP" id="MF_00672">
    <property type="entry name" value="UPF0761"/>
    <property type="match status" value="1"/>
</dbReference>
<dbReference type="InterPro" id="IPR023679">
    <property type="entry name" value="UPF0761_bac"/>
</dbReference>
<dbReference type="InterPro" id="IPR017039">
    <property type="entry name" value="Virul_fac_BrkB"/>
</dbReference>
<dbReference type="NCBIfam" id="TIGR00765">
    <property type="entry name" value="yihY_not_rbn"/>
    <property type="match status" value="1"/>
</dbReference>
<dbReference type="PANTHER" id="PTHR30213">
    <property type="entry name" value="INNER MEMBRANE PROTEIN YHJD"/>
    <property type="match status" value="1"/>
</dbReference>
<dbReference type="PANTHER" id="PTHR30213:SF0">
    <property type="entry name" value="UPF0761 MEMBRANE PROTEIN YIHY"/>
    <property type="match status" value="1"/>
</dbReference>
<dbReference type="Pfam" id="PF03631">
    <property type="entry name" value="Virul_fac_BrkB"/>
    <property type="match status" value="1"/>
</dbReference>
<gene>
    <name type="ordered locus">RC1_0578</name>
</gene>
<sequence length="444" mass="48150">MLTSDRLRGMLRRLPGRLPDAVGVVRHAVPRFWNNNGFAIAASLTYTTLLALVPLLTVTFAIFSAFPAYGRLRDTARELIFDSLAPSVSDEVQAYFDQFISNAAALTGFGVIGLSLTSILLFFSVEAALNVIFRATEPRPLVIRLLSFWAVLTIMPLLLGASLSVTSGVVADLQATGRDAVTVLRFMLPGLLEAAAFTLMFLMIPNREVQWFDALVGGIAAALLMEVSKVGFGLYIAAFPTYETIYGALSVIPIFLFWLYTVWSVVLFGAEITATLPEWRAGKITQVGPEGLLSAQRIVVAVAILHELQRAARLGVGIRRGTLSTRVPVGANVIDGMLEQLQAAHWVARTRDGAWVATRNLSDATVDDLRHSLGMAIRGNLRSVGHLSAGWQNRLADLFERAEAADREVLGVCFADLFADPPSGQPSGQVETAVRQRTGLQGRI</sequence>
<keyword id="KW-0997">Cell inner membrane</keyword>
<keyword id="KW-1003">Cell membrane</keyword>
<keyword id="KW-0472">Membrane</keyword>
<keyword id="KW-1185">Reference proteome</keyword>
<keyword id="KW-0812">Transmembrane</keyword>
<keyword id="KW-1133">Transmembrane helix</keyword>
<feature type="chain" id="PRO_0000391052" description="UPF0761 membrane protein RC1_0578">
    <location>
        <begin position="1"/>
        <end position="444"/>
    </location>
</feature>
<feature type="transmembrane region" description="Helical" evidence="1">
    <location>
        <begin position="49"/>
        <end position="69"/>
    </location>
</feature>
<feature type="transmembrane region" description="Helical" evidence="1">
    <location>
        <begin position="103"/>
        <end position="123"/>
    </location>
</feature>
<feature type="transmembrane region" description="Helical" evidence="1">
    <location>
        <begin position="145"/>
        <end position="165"/>
    </location>
</feature>
<feature type="transmembrane region" description="Helical" evidence="1">
    <location>
        <begin position="186"/>
        <end position="206"/>
    </location>
</feature>
<feature type="transmembrane region" description="Helical" evidence="1">
    <location>
        <begin position="219"/>
        <end position="239"/>
    </location>
</feature>
<feature type="transmembrane region" description="Helical" evidence="1">
    <location>
        <begin position="248"/>
        <end position="268"/>
    </location>
</feature>
<feature type="region of interest" description="Disordered" evidence="2">
    <location>
        <begin position="423"/>
        <end position="444"/>
    </location>
</feature>
<protein>
    <recommendedName>
        <fullName evidence="1">UPF0761 membrane protein RC1_0578</fullName>
    </recommendedName>
</protein>
<comment type="subcellular location">
    <subcellularLocation>
        <location evidence="1">Cell inner membrane</location>
        <topology evidence="1">Multi-pass membrane protein</topology>
    </subcellularLocation>
</comment>
<comment type="similarity">
    <text evidence="1">Belongs to the UPF0761 family.</text>
</comment>
<organism>
    <name type="scientific">Rhodospirillum centenum (strain ATCC 51521 / SW)</name>
    <dbReference type="NCBI Taxonomy" id="414684"/>
    <lineage>
        <taxon>Bacteria</taxon>
        <taxon>Pseudomonadati</taxon>
        <taxon>Pseudomonadota</taxon>
        <taxon>Alphaproteobacteria</taxon>
        <taxon>Rhodospirillales</taxon>
        <taxon>Rhodospirillaceae</taxon>
        <taxon>Rhodospirillum</taxon>
    </lineage>
</organism>
<reference key="1">
    <citation type="submission" date="2007-03" db="EMBL/GenBank/DDBJ databases">
        <title>Genome sequence of Rhodospirillum centenum.</title>
        <authorList>
            <person name="Touchman J.W."/>
            <person name="Bauer C."/>
            <person name="Blankenship R.E."/>
        </authorList>
    </citation>
    <scope>NUCLEOTIDE SEQUENCE [LARGE SCALE GENOMIC DNA]</scope>
    <source>
        <strain>ATCC 51521 / SW</strain>
    </source>
</reference>
<accession>B6IRC8</accession>
<proteinExistence type="inferred from homology"/>
<name>Y578_RHOCS</name>